<name>LRMDA_HUMAN</name>
<keyword id="KW-0015">Albinism</keyword>
<keyword id="KW-0221">Differentiation</keyword>
<keyword id="KW-0433">Leucine-rich repeat</keyword>
<keyword id="KW-1267">Proteomics identification</keyword>
<keyword id="KW-1185">Reference proteome</keyword>
<keyword id="KW-0677">Repeat</keyword>
<organism>
    <name type="scientific">Homo sapiens</name>
    <name type="common">Human</name>
    <dbReference type="NCBI Taxonomy" id="9606"/>
    <lineage>
        <taxon>Eukaryota</taxon>
        <taxon>Metazoa</taxon>
        <taxon>Chordata</taxon>
        <taxon>Craniata</taxon>
        <taxon>Vertebrata</taxon>
        <taxon>Euteleostomi</taxon>
        <taxon>Mammalia</taxon>
        <taxon>Eutheria</taxon>
        <taxon>Euarchontoglires</taxon>
        <taxon>Primates</taxon>
        <taxon>Haplorrhini</taxon>
        <taxon>Catarrhini</taxon>
        <taxon>Hominidae</taxon>
        <taxon>Homo</taxon>
    </lineage>
</organism>
<accession>Q9H2I8</accession>
<accession>B1AVW6</accession>
<sequence length="198" mass="22568">MEKYLSLSGNHSSNKRSLEGLSAFRSLEELILDNNQLGDDLVLPGLPRLHTLTLNKNRITDLENLLDHLAEVTPALEYLSLLGNVACPNELVSLEKDEEDYKRYRCFVLYKLPNLKFLDAQKVTRQEREEALVRGVFMKVVKPKASSEDVASSPERHYTPLPSASRELTSHQGVLGKCRYVYYGKNSEGNRFIRDDQL</sequence>
<evidence type="ECO:0000269" key="1">
    <source>
    </source>
</evidence>
<evidence type="ECO:0000305" key="2"/>
<evidence type="ECO:0000312" key="3">
    <source>
        <dbReference type="HGNC" id="HGNC:23405"/>
    </source>
</evidence>
<feature type="chain" id="PRO_0000089781" description="Leucine-rich melanocyte differentiation-associated protein">
    <location>
        <begin position="1"/>
        <end position="198"/>
    </location>
</feature>
<feature type="repeat" description="LRR 1">
    <location>
        <begin position="2"/>
        <end position="22"/>
    </location>
</feature>
<feature type="repeat" description="LRR 2">
    <location>
        <begin position="26"/>
        <end position="47"/>
    </location>
</feature>
<feature type="repeat" description="LRR 3">
    <location>
        <begin position="48"/>
        <end position="69"/>
    </location>
</feature>
<feature type="repeat" description="LRR 4">
    <location>
        <begin position="75"/>
        <end position="95"/>
    </location>
</feature>
<feature type="domain" description="LRRCT">
    <location>
        <begin position="96"/>
        <end position="134"/>
    </location>
</feature>
<feature type="sequence variant" id="VAR_033686" description="In dbSNP:rs35349706.">
    <original>S</original>
    <variation>F</variation>
    <location>
        <position position="153"/>
    </location>
</feature>
<comment type="function">
    <text evidence="1">Required for melanocyte differentiation.</text>
</comment>
<comment type="tissue specificity">
    <text evidence="1">In the embryo, expressed in melanoblasts. In the fetus, expressed in melanocytes. Not detected in retinal pigment epithelial cells.</text>
</comment>
<comment type="disease" evidence="1">
    <disease id="DI-03749">
        <name>Albinism, oculocutaneous, 7</name>
        <acronym>OCA7</acronym>
        <description>A disorder of pigmentation characterized by reduced biosynthesis of melanin in the skin, hair and eyes. Patients show reduced or lacking pigmentation associated with classic albinism ocular abnormalities, including decreased visual acuity, macular hypoplasia, optic dysplasia, atypical choroidal vessels, and nystagmus.</description>
        <dbReference type="MIM" id="615179"/>
    </disease>
    <text>The disease is caused by variants affecting the gene represented in this entry.</text>
</comment>
<dbReference type="EMBL" id="AF267860">
    <property type="protein sequence ID" value="AAG44729.1"/>
    <property type="molecule type" value="mRNA"/>
</dbReference>
<dbReference type="EMBL" id="AC012047">
    <property type="status" value="NOT_ANNOTATED_CDS"/>
    <property type="molecule type" value="Genomic_DNA"/>
</dbReference>
<dbReference type="EMBL" id="AC013286">
    <property type="status" value="NOT_ANNOTATED_CDS"/>
    <property type="molecule type" value="Genomic_DNA"/>
</dbReference>
<dbReference type="EMBL" id="AC024603">
    <property type="status" value="NOT_ANNOTATED_CDS"/>
    <property type="molecule type" value="Genomic_DNA"/>
</dbReference>
<dbReference type="EMBL" id="AL731568">
    <property type="status" value="NOT_ANNOTATED_CDS"/>
    <property type="molecule type" value="Genomic_DNA"/>
</dbReference>
<dbReference type="EMBL" id="CH471083">
    <property type="protein sequence ID" value="EAW54585.1"/>
    <property type="molecule type" value="Genomic_DNA"/>
</dbReference>
<dbReference type="CCDS" id="CCDS7351.1"/>
<dbReference type="RefSeq" id="NP_114413.1">
    <property type="nucleotide sequence ID" value="NM_032024.5"/>
</dbReference>
<dbReference type="SMR" id="Q9H2I8"/>
<dbReference type="BioGRID" id="123821">
    <property type="interactions" value="7"/>
</dbReference>
<dbReference type="FunCoup" id="Q9H2I8">
    <property type="interactions" value="87"/>
</dbReference>
<dbReference type="STRING" id="9606.ENSP00000480240"/>
<dbReference type="iPTMnet" id="Q9H2I8"/>
<dbReference type="PhosphoSitePlus" id="Q9H2I8"/>
<dbReference type="BioMuta" id="LRMDA"/>
<dbReference type="DMDM" id="46576650"/>
<dbReference type="jPOST" id="Q9H2I8"/>
<dbReference type="MassIVE" id="Q9H2I8"/>
<dbReference type="PaxDb" id="9606-ENSP00000361577"/>
<dbReference type="PeptideAtlas" id="Q9H2I8"/>
<dbReference type="ProteomicsDB" id="80553"/>
<dbReference type="Pumba" id="Q9H2I8"/>
<dbReference type="Antibodypedia" id="64297">
    <property type="antibodies" value="9 antibodies from 5 providers"/>
</dbReference>
<dbReference type="DNASU" id="83938"/>
<dbReference type="Ensembl" id="ENST00000372499.5">
    <property type="protein sequence ID" value="ENSP00000361577.1"/>
    <property type="gene ID" value="ENSG00000148655.16"/>
</dbReference>
<dbReference type="GeneID" id="83938"/>
<dbReference type="KEGG" id="hsa:83938"/>
<dbReference type="UCSC" id="uc001jxi.4">
    <property type="organism name" value="human"/>
</dbReference>
<dbReference type="AGR" id="HGNC:23405"/>
<dbReference type="CTD" id="83938"/>
<dbReference type="DisGeNET" id="83938"/>
<dbReference type="GeneCards" id="LRMDA"/>
<dbReference type="HGNC" id="HGNC:23405">
    <property type="gene designation" value="LRMDA"/>
</dbReference>
<dbReference type="HPA" id="ENSG00000148655">
    <property type="expression patterns" value="Tissue enhanced (adrenal gland, epididymis)"/>
</dbReference>
<dbReference type="MalaCards" id="LRMDA"/>
<dbReference type="MIM" id="614537">
    <property type="type" value="gene"/>
</dbReference>
<dbReference type="MIM" id="615179">
    <property type="type" value="phenotype"/>
</dbReference>
<dbReference type="neXtProt" id="NX_Q9H2I8"/>
<dbReference type="OpenTargets" id="ENSG00000148655"/>
<dbReference type="Orphanet" id="352745">
    <property type="disease" value="Oculocutaneous albinism type 7"/>
</dbReference>
<dbReference type="PharmGKB" id="PA134899373"/>
<dbReference type="VEuPathDB" id="HostDB:ENSG00000148655"/>
<dbReference type="eggNOG" id="KOG1644">
    <property type="taxonomic scope" value="Eukaryota"/>
</dbReference>
<dbReference type="GeneTree" id="ENSGT00940000153289"/>
<dbReference type="HOGENOM" id="CLU_075145_2_0_1"/>
<dbReference type="InParanoid" id="Q9H2I8"/>
<dbReference type="OrthoDB" id="272149at2759"/>
<dbReference type="PAN-GO" id="Q9H2I8">
    <property type="GO annotations" value="1 GO annotation based on evolutionary models"/>
</dbReference>
<dbReference type="PhylomeDB" id="Q9H2I8"/>
<dbReference type="TreeFam" id="TF328882"/>
<dbReference type="PathwayCommons" id="Q9H2I8"/>
<dbReference type="BioGRID-ORCS" id="83938">
    <property type="hits" value="13 hits in 1071 CRISPR screens"/>
</dbReference>
<dbReference type="ChiTaRS" id="C10orf11">
    <property type="organism name" value="human"/>
</dbReference>
<dbReference type="GenomeRNAi" id="83938"/>
<dbReference type="Pharos" id="Q9H2I8">
    <property type="development level" value="Tdark"/>
</dbReference>
<dbReference type="PRO" id="PR:Q9H2I8"/>
<dbReference type="Proteomes" id="UP000005640">
    <property type="component" value="Chromosome 10"/>
</dbReference>
<dbReference type="RNAct" id="Q9H2I8">
    <property type="molecule type" value="protein"/>
</dbReference>
<dbReference type="Bgee" id="ENSG00000148655">
    <property type="expression patterns" value="Expressed in calcaneal tendon and 144 other cell types or tissues"/>
</dbReference>
<dbReference type="ExpressionAtlas" id="Q9H2I8">
    <property type="expression patterns" value="baseline and differential"/>
</dbReference>
<dbReference type="GO" id="GO:0030318">
    <property type="term" value="P:melanocyte differentiation"/>
    <property type="evidence" value="ECO:0000315"/>
    <property type="project" value="UniProtKB"/>
</dbReference>
<dbReference type="FunFam" id="3.80.10.10:FF:000136">
    <property type="entry name" value="leucine-rich melanocyte differentiation-associated protein isoform X1"/>
    <property type="match status" value="1"/>
</dbReference>
<dbReference type="Gene3D" id="3.80.10.10">
    <property type="entry name" value="Ribonuclease Inhibitor"/>
    <property type="match status" value="1"/>
</dbReference>
<dbReference type="InterPro" id="IPR001611">
    <property type="entry name" value="Leu-rich_rpt"/>
</dbReference>
<dbReference type="InterPro" id="IPR043313">
    <property type="entry name" value="LRMDA"/>
</dbReference>
<dbReference type="InterPro" id="IPR032675">
    <property type="entry name" value="LRR_dom_sf"/>
</dbReference>
<dbReference type="PANTHER" id="PTHR46282">
    <property type="entry name" value="LEUCINE-RICH MELANOCYTE DIFFERENTIATION-ASSOCIATED PROTEIN"/>
    <property type="match status" value="1"/>
</dbReference>
<dbReference type="PANTHER" id="PTHR46282:SF2">
    <property type="entry name" value="LEUCINE-RICH MELANOCYTE DIFFERENTIATION-ASSOCIATED PROTEIN"/>
    <property type="match status" value="1"/>
</dbReference>
<dbReference type="Pfam" id="PF14580">
    <property type="entry name" value="LRR_9"/>
    <property type="match status" value="1"/>
</dbReference>
<dbReference type="SUPFAM" id="SSF52058">
    <property type="entry name" value="L domain-like"/>
    <property type="match status" value="1"/>
</dbReference>
<dbReference type="PROSITE" id="PS51450">
    <property type="entry name" value="LRR"/>
    <property type="match status" value="3"/>
</dbReference>
<proteinExistence type="evidence at protein level"/>
<reference key="1">
    <citation type="submission" date="2000-05" db="EMBL/GenBank/DDBJ databases">
        <title>A novel gene expressed in human pheochromocytoma.</title>
        <authorList>
            <person name="Xu X."/>
            <person name="Yang Y."/>
            <person name="Gao G."/>
            <person name="Xiao H."/>
            <person name="Chen Z."/>
            <person name="Han Z."/>
        </authorList>
    </citation>
    <scope>NUCLEOTIDE SEQUENCE [LARGE SCALE MRNA]</scope>
    <source>
        <tissue>Pheochromocytoma</tissue>
    </source>
</reference>
<reference key="2">
    <citation type="journal article" date="2004" name="Nature">
        <title>The DNA sequence and comparative analysis of human chromosome 10.</title>
        <authorList>
            <person name="Deloukas P."/>
            <person name="Earthrowl M.E."/>
            <person name="Grafham D.V."/>
            <person name="Rubenfield M."/>
            <person name="French L."/>
            <person name="Steward C.A."/>
            <person name="Sims S.K."/>
            <person name="Jones M.C."/>
            <person name="Searle S."/>
            <person name="Scott C."/>
            <person name="Howe K."/>
            <person name="Hunt S.E."/>
            <person name="Andrews T.D."/>
            <person name="Gilbert J.G.R."/>
            <person name="Swarbreck D."/>
            <person name="Ashurst J.L."/>
            <person name="Taylor A."/>
            <person name="Battles J."/>
            <person name="Bird C.P."/>
            <person name="Ainscough R."/>
            <person name="Almeida J.P."/>
            <person name="Ashwell R.I.S."/>
            <person name="Ambrose K.D."/>
            <person name="Babbage A.K."/>
            <person name="Bagguley C.L."/>
            <person name="Bailey J."/>
            <person name="Banerjee R."/>
            <person name="Bates K."/>
            <person name="Beasley H."/>
            <person name="Bray-Allen S."/>
            <person name="Brown A.J."/>
            <person name="Brown J.Y."/>
            <person name="Burford D.C."/>
            <person name="Burrill W."/>
            <person name="Burton J."/>
            <person name="Cahill P."/>
            <person name="Camire D."/>
            <person name="Carter N.P."/>
            <person name="Chapman J.C."/>
            <person name="Clark S.Y."/>
            <person name="Clarke G."/>
            <person name="Clee C.M."/>
            <person name="Clegg S."/>
            <person name="Corby N."/>
            <person name="Coulson A."/>
            <person name="Dhami P."/>
            <person name="Dutta I."/>
            <person name="Dunn M."/>
            <person name="Faulkner L."/>
            <person name="Frankish A."/>
            <person name="Frankland J.A."/>
            <person name="Garner P."/>
            <person name="Garnett J."/>
            <person name="Gribble S."/>
            <person name="Griffiths C."/>
            <person name="Grocock R."/>
            <person name="Gustafson E."/>
            <person name="Hammond S."/>
            <person name="Harley J.L."/>
            <person name="Hart E."/>
            <person name="Heath P.D."/>
            <person name="Ho T.P."/>
            <person name="Hopkins B."/>
            <person name="Horne J."/>
            <person name="Howden P.J."/>
            <person name="Huckle E."/>
            <person name="Hynds C."/>
            <person name="Johnson C."/>
            <person name="Johnson D."/>
            <person name="Kana A."/>
            <person name="Kay M."/>
            <person name="Kimberley A.M."/>
            <person name="Kershaw J.K."/>
            <person name="Kokkinaki M."/>
            <person name="Laird G.K."/>
            <person name="Lawlor S."/>
            <person name="Lee H.M."/>
            <person name="Leongamornlert D.A."/>
            <person name="Laird G."/>
            <person name="Lloyd C."/>
            <person name="Lloyd D.M."/>
            <person name="Loveland J."/>
            <person name="Lovell J."/>
            <person name="McLaren S."/>
            <person name="McLay K.E."/>
            <person name="McMurray A."/>
            <person name="Mashreghi-Mohammadi M."/>
            <person name="Matthews L."/>
            <person name="Milne S."/>
            <person name="Nickerson T."/>
            <person name="Nguyen M."/>
            <person name="Overton-Larty E."/>
            <person name="Palmer S.A."/>
            <person name="Pearce A.V."/>
            <person name="Peck A.I."/>
            <person name="Pelan S."/>
            <person name="Phillimore B."/>
            <person name="Porter K."/>
            <person name="Rice C.M."/>
            <person name="Rogosin A."/>
            <person name="Ross M.T."/>
            <person name="Sarafidou T."/>
            <person name="Sehra H.K."/>
            <person name="Shownkeen R."/>
            <person name="Skuce C.D."/>
            <person name="Smith M."/>
            <person name="Standring L."/>
            <person name="Sycamore N."/>
            <person name="Tester J."/>
            <person name="Thorpe A."/>
            <person name="Torcasso W."/>
            <person name="Tracey A."/>
            <person name="Tromans A."/>
            <person name="Tsolas J."/>
            <person name="Wall M."/>
            <person name="Walsh J."/>
            <person name="Wang H."/>
            <person name="Weinstock K."/>
            <person name="West A.P."/>
            <person name="Willey D.L."/>
            <person name="Whitehead S.L."/>
            <person name="Wilming L."/>
            <person name="Wray P.W."/>
            <person name="Young L."/>
            <person name="Chen Y."/>
            <person name="Lovering R.C."/>
            <person name="Moschonas N.K."/>
            <person name="Siebert R."/>
            <person name="Fechtel K."/>
            <person name="Bentley D."/>
            <person name="Durbin R.M."/>
            <person name="Hubbard T."/>
            <person name="Doucette-Stamm L."/>
            <person name="Beck S."/>
            <person name="Smith D.R."/>
            <person name="Rogers J."/>
        </authorList>
    </citation>
    <scope>NUCLEOTIDE SEQUENCE [LARGE SCALE GENOMIC DNA]</scope>
</reference>
<reference key="3">
    <citation type="submission" date="2005-07" db="EMBL/GenBank/DDBJ databases">
        <authorList>
            <person name="Mural R.J."/>
            <person name="Istrail S."/>
            <person name="Sutton G.G."/>
            <person name="Florea L."/>
            <person name="Halpern A.L."/>
            <person name="Mobarry C.M."/>
            <person name="Lippert R."/>
            <person name="Walenz B."/>
            <person name="Shatkay H."/>
            <person name="Dew I."/>
            <person name="Miller J.R."/>
            <person name="Flanigan M.J."/>
            <person name="Edwards N.J."/>
            <person name="Bolanos R."/>
            <person name="Fasulo D."/>
            <person name="Halldorsson B.V."/>
            <person name="Hannenhalli S."/>
            <person name="Turner R."/>
            <person name="Yooseph S."/>
            <person name="Lu F."/>
            <person name="Nusskern D.R."/>
            <person name="Shue B.C."/>
            <person name="Zheng X.H."/>
            <person name="Zhong F."/>
            <person name="Delcher A.L."/>
            <person name="Huson D.H."/>
            <person name="Kravitz S.A."/>
            <person name="Mouchard L."/>
            <person name="Reinert K."/>
            <person name="Remington K.A."/>
            <person name="Clark A.G."/>
            <person name="Waterman M.S."/>
            <person name="Eichler E.E."/>
            <person name="Adams M.D."/>
            <person name="Hunkapiller M.W."/>
            <person name="Myers E.W."/>
            <person name="Venter J.C."/>
        </authorList>
    </citation>
    <scope>NUCLEOTIDE SEQUENCE [LARGE SCALE GENOMIC DNA]</scope>
</reference>
<reference key="4">
    <citation type="journal article" date="2008" name="J. Proteome Res.">
        <title>Phosphoproteome of resting human platelets.</title>
        <authorList>
            <person name="Zahedi R.P."/>
            <person name="Lewandrowski U."/>
            <person name="Wiesner J."/>
            <person name="Wortelkamp S."/>
            <person name="Moebius J."/>
            <person name="Schuetz C."/>
            <person name="Walter U."/>
            <person name="Gambaryan S."/>
            <person name="Sickmann A."/>
        </authorList>
    </citation>
    <scope>IDENTIFICATION BY MASS SPECTROMETRY [LARGE SCALE ANALYSIS]</scope>
    <source>
        <tissue>Platelet</tissue>
    </source>
</reference>
<reference key="5">
    <citation type="journal article" date="2013" name="Am. J. Hum. Genet.">
        <title>Mutations in c10orf11, a melanocyte-differentiation gene, cause autosomal-recessive albinism.</title>
        <authorList>
            <person name="Groenskov K."/>
            <person name="Dooley C.M."/>
            <person name="Oestergaard E."/>
            <person name="Kelsh R.N."/>
            <person name="Hansen L."/>
            <person name="Levesque M.P."/>
            <person name="Vilhelmsen K."/>
            <person name="Moellgaard K."/>
            <person name="Stemple D.L."/>
            <person name="Rosenberg T."/>
        </authorList>
    </citation>
    <scope>FUNCTION</scope>
    <scope>TISSUE SPECIFICITY</scope>
    <scope>INVOLVEMENT IN OCA7</scope>
</reference>
<reference key="6">
    <citation type="journal article" date="2015" name="Proteomics">
        <title>N-terminome analysis of the human mitochondrial proteome.</title>
        <authorList>
            <person name="Vaca Jacome A.S."/>
            <person name="Rabilloud T."/>
            <person name="Schaeffer-Reiss C."/>
            <person name="Rompais M."/>
            <person name="Ayoub D."/>
            <person name="Lane L."/>
            <person name="Bairoch A."/>
            <person name="Van Dorsselaer A."/>
            <person name="Carapito C."/>
        </authorList>
    </citation>
    <scope>IDENTIFICATION BY MASS SPECTROMETRY [LARGE SCALE ANALYSIS]</scope>
</reference>
<gene>
    <name evidence="3" type="primary">LRMDA</name>
    <name type="ORF">C10orf11</name>
    <name type="ORF">CDA017</name>
</gene>
<protein>
    <recommendedName>
        <fullName evidence="2">Leucine-rich melanocyte differentiation-associated protein</fullName>
    </recommendedName>
</protein>